<keyword id="KW-0044">Antibiotic</keyword>
<keyword id="KW-0929">Antimicrobial</keyword>
<keyword id="KW-0211">Defensin</keyword>
<keyword id="KW-1015">Disulfide bond</keyword>
<keyword id="KW-0472">Membrane</keyword>
<keyword id="KW-0964">Secreted</keyword>
<keyword id="KW-0732">Signal</keyword>
<feature type="signal peptide" evidence="3">
    <location>
        <begin position="1"/>
        <end position="21"/>
    </location>
</feature>
<feature type="propeptide" id="PRO_0000006894" evidence="1">
    <location>
        <begin position="22"/>
        <end position="32"/>
    </location>
</feature>
<feature type="peptide" id="PRO_0000006895" description="Beta-defensin 1">
    <location>
        <begin position="33"/>
        <end position="68"/>
    </location>
</feature>
<feature type="disulfide bond" evidence="1">
    <location>
        <begin position="37"/>
        <end position="66"/>
    </location>
</feature>
<feature type="disulfide bond" evidence="1">
    <location>
        <begin position="44"/>
        <end position="59"/>
    </location>
</feature>
<feature type="disulfide bond" evidence="1">
    <location>
        <begin position="49"/>
        <end position="67"/>
    </location>
</feature>
<protein>
    <recommendedName>
        <fullName>Beta-defensin 1</fullName>
        <shortName>BD-1</shortName>
    </recommendedName>
    <alternativeName>
        <fullName>Defensin, beta 1</fullName>
    </alternativeName>
</protein>
<sequence length="68" mass="7544">MRTSYLLLFTLCLLLSEMASGDNFLTGLGHRSDHYNCVRSGGQCLYSACPIYTKIQGTCYHGKAKCCK</sequence>
<organism>
    <name type="scientific">Allochrocebus preussi</name>
    <name type="common">Preuss's monkey</name>
    <name type="synonym">Cercopithecus preussi</name>
    <dbReference type="NCBI Taxonomy" id="147649"/>
    <lineage>
        <taxon>Eukaryota</taxon>
        <taxon>Metazoa</taxon>
        <taxon>Chordata</taxon>
        <taxon>Craniata</taxon>
        <taxon>Vertebrata</taxon>
        <taxon>Euteleostomi</taxon>
        <taxon>Mammalia</taxon>
        <taxon>Eutheria</taxon>
        <taxon>Euarchontoglires</taxon>
        <taxon>Primates</taxon>
        <taxon>Haplorrhini</taxon>
        <taxon>Catarrhini</taxon>
        <taxon>Cercopithecidae</taxon>
        <taxon>Cercopithecinae</taxon>
        <taxon>Allochrocebus</taxon>
    </lineage>
</organism>
<accession>Q7JGL8</accession>
<comment type="function">
    <text evidence="2">Has bactericidal activity. May act as a ligand for C-C chemokine receptor CCR6. Positively regulates the sperm motility and bactericidal activity in a CCR6-dependent manner. Binds to CCR6 and triggers Ca2+ mobilization in the sperm which is important for its motility.</text>
</comment>
<comment type="subunit">
    <text evidence="2">Monomer. Homodimer.</text>
</comment>
<comment type="subcellular location">
    <subcellularLocation>
        <location evidence="2">Secreted</location>
    </subcellularLocation>
    <subcellularLocation>
        <location evidence="2">Membrane</location>
    </subcellularLocation>
    <text evidence="2">Associates with tumor cell membrane-derived microvesicles.</text>
</comment>
<comment type="similarity">
    <text evidence="4">Belongs to the beta-defensin family.</text>
</comment>
<evidence type="ECO:0000250" key="1"/>
<evidence type="ECO:0000250" key="2">
    <source>
        <dbReference type="UniProtKB" id="P60022"/>
    </source>
</evidence>
<evidence type="ECO:0000255" key="3"/>
<evidence type="ECO:0000305" key="4"/>
<dbReference type="EMBL" id="AY033759">
    <property type="protein sequence ID" value="AAK61470.1"/>
    <property type="molecule type" value="Genomic_DNA"/>
</dbReference>
<dbReference type="EMBL" id="AY033743">
    <property type="protein sequence ID" value="AAK61470.1"/>
    <property type="status" value="JOINED"/>
    <property type="molecule type" value="Genomic_DNA"/>
</dbReference>
<dbReference type="SMR" id="Q7JGL8"/>
<dbReference type="GO" id="GO:0005615">
    <property type="term" value="C:extracellular space"/>
    <property type="evidence" value="ECO:0007669"/>
    <property type="project" value="TreeGrafter"/>
</dbReference>
<dbReference type="GO" id="GO:0016020">
    <property type="term" value="C:membrane"/>
    <property type="evidence" value="ECO:0000250"/>
    <property type="project" value="UniProtKB"/>
</dbReference>
<dbReference type="GO" id="GO:1990742">
    <property type="term" value="C:microvesicle"/>
    <property type="evidence" value="ECO:0000250"/>
    <property type="project" value="UniProtKB"/>
</dbReference>
<dbReference type="GO" id="GO:0097225">
    <property type="term" value="C:sperm midpiece"/>
    <property type="evidence" value="ECO:0000250"/>
    <property type="project" value="UniProtKB"/>
</dbReference>
<dbReference type="GO" id="GO:0031731">
    <property type="term" value="F:CCR6 chemokine receptor binding"/>
    <property type="evidence" value="ECO:0000250"/>
    <property type="project" value="UniProtKB"/>
</dbReference>
<dbReference type="GO" id="GO:0042802">
    <property type="term" value="F:identical protein binding"/>
    <property type="evidence" value="ECO:0000250"/>
    <property type="project" value="UniProtKB"/>
</dbReference>
<dbReference type="GO" id="GO:0019722">
    <property type="term" value="P:calcium-mediated signaling"/>
    <property type="evidence" value="ECO:0000250"/>
    <property type="project" value="UniProtKB"/>
</dbReference>
<dbReference type="GO" id="GO:0050829">
    <property type="term" value="P:defense response to Gram-negative bacterium"/>
    <property type="evidence" value="ECO:0000250"/>
    <property type="project" value="UniProtKB"/>
</dbReference>
<dbReference type="GO" id="GO:0050830">
    <property type="term" value="P:defense response to Gram-positive bacterium"/>
    <property type="evidence" value="ECO:0000250"/>
    <property type="project" value="UniProtKB"/>
</dbReference>
<dbReference type="GO" id="GO:0002227">
    <property type="term" value="P:innate immune response in mucosa"/>
    <property type="evidence" value="ECO:0007669"/>
    <property type="project" value="TreeGrafter"/>
</dbReference>
<dbReference type="GO" id="GO:0060474">
    <property type="term" value="P:positive regulation of flagellated sperm motility involved in capacitation"/>
    <property type="evidence" value="ECO:0000250"/>
    <property type="project" value="UniProtKB"/>
</dbReference>
<dbReference type="FunFam" id="3.10.360.10:FF:000001">
    <property type="entry name" value="Beta-defensin 1"/>
    <property type="match status" value="1"/>
</dbReference>
<dbReference type="Gene3D" id="3.10.360.10">
    <property type="entry name" value="Antimicrobial Peptide, Beta-defensin 2, Chain A"/>
    <property type="match status" value="1"/>
</dbReference>
<dbReference type="InterPro" id="IPR001855">
    <property type="entry name" value="Defensin_beta-like"/>
</dbReference>
<dbReference type="PANTHER" id="PTHR21388:SF9">
    <property type="entry name" value="BETA-DEFENSIN 1"/>
    <property type="match status" value="1"/>
</dbReference>
<dbReference type="PANTHER" id="PTHR21388">
    <property type="entry name" value="BETA-DEFENSIN-RELATED"/>
    <property type="match status" value="1"/>
</dbReference>
<dbReference type="Pfam" id="PF00711">
    <property type="entry name" value="Defensin_beta"/>
    <property type="match status" value="1"/>
</dbReference>
<dbReference type="SUPFAM" id="SSF57392">
    <property type="entry name" value="Defensin-like"/>
    <property type="match status" value="1"/>
</dbReference>
<gene>
    <name type="primary">DEFB1</name>
</gene>
<name>DEFB1_ALLPU</name>
<reference key="1">
    <citation type="journal article" date="2002" name="Immunogenetics">
        <title>Beta-defensin 1 gene variability among non-human primates.</title>
        <authorList>
            <person name="Del Pero M."/>
            <person name="Boniotto M."/>
            <person name="Zuccon D."/>
            <person name="Cervella P."/>
            <person name="Spano A."/>
            <person name="Amoroso A."/>
            <person name="Crovella S."/>
        </authorList>
    </citation>
    <scope>NUCLEOTIDE SEQUENCE [GENOMIC DNA]</scope>
</reference>
<proteinExistence type="inferred from homology"/>